<protein>
    <recommendedName>
        <fullName>Histone H2B</fullName>
    </recommendedName>
</protein>
<dbReference type="SMR" id="P82887"/>
<dbReference type="GO" id="GO:0000786">
    <property type="term" value="C:nucleosome"/>
    <property type="evidence" value="ECO:0007669"/>
    <property type="project" value="UniProtKB-KW"/>
</dbReference>
<dbReference type="GO" id="GO:0005634">
    <property type="term" value="C:nucleus"/>
    <property type="evidence" value="ECO:0007669"/>
    <property type="project" value="UniProtKB-SubCell"/>
</dbReference>
<dbReference type="GO" id="GO:0003677">
    <property type="term" value="F:DNA binding"/>
    <property type="evidence" value="ECO:0007669"/>
    <property type="project" value="UniProtKB-KW"/>
</dbReference>
<dbReference type="GO" id="GO:0046982">
    <property type="term" value="F:protein heterodimerization activity"/>
    <property type="evidence" value="ECO:0007669"/>
    <property type="project" value="InterPro"/>
</dbReference>
<dbReference type="GO" id="GO:0030527">
    <property type="term" value="F:structural constituent of chromatin"/>
    <property type="evidence" value="ECO:0007669"/>
    <property type="project" value="InterPro"/>
</dbReference>
<dbReference type="CDD" id="cd22910">
    <property type="entry name" value="HFD_H2B"/>
    <property type="match status" value="1"/>
</dbReference>
<dbReference type="FunFam" id="1.10.20.10:FF:000014">
    <property type="entry name" value="Histone H2B"/>
    <property type="match status" value="1"/>
</dbReference>
<dbReference type="Gene3D" id="1.10.20.10">
    <property type="entry name" value="Histone, subunit A"/>
    <property type="match status" value="1"/>
</dbReference>
<dbReference type="InterPro" id="IPR009072">
    <property type="entry name" value="Histone-fold"/>
</dbReference>
<dbReference type="InterPro" id="IPR007125">
    <property type="entry name" value="Histone_H2A/H2B/H3"/>
</dbReference>
<dbReference type="InterPro" id="IPR000558">
    <property type="entry name" value="Histone_H2B"/>
</dbReference>
<dbReference type="InterPro" id="IPR055333">
    <property type="entry name" value="HISTONE_H2B_site"/>
</dbReference>
<dbReference type="PANTHER" id="PTHR23428">
    <property type="entry name" value="HISTONE H2B"/>
    <property type="match status" value="1"/>
</dbReference>
<dbReference type="Pfam" id="PF00125">
    <property type="entry name" value="Histone"/>
    <property type="match status" value="1"/>
</dbReference>
<dbReference type="PRINTS" id="PR00621">
    <property type="entry name" value="HISTONEH2B"/>
</dbReference>
<dbReference type="SMART" id="SM00427">
    <property type="entry name" value="H2B"/>
    <property type="match status" value="1"/>
</dbReference>
<dbReference type="SUPFAM" id="SSF47113">
    <property type="entry name" value="Histone-fold"/>
    <property type="match status" value="1"/>
</dbReference>
<dbReference type="PROSITE" id="PS00357">
    <property type="entry name" value="HISTONE_H2B"/>
    <property type="match status" value="1"/>
</dbReference>
<reference evidence="4" key="1">
    <citation type="submission" date="2000-12" db="UniProtKB">
        <authorList>
            <person name="Rodrigues J.A."/>
            <person name="Spit A."/>
            <person name="Brandt W.F."/>
        </authorList>
    </citation>
    <scope>PROTEIN SEQUENCE OF 2-114</scope>
    <scope>ACETYLATION AT LYS-3</scope>
</reference>
<organism>
    <name type="scientific">Olisthodiscus luteus</name>
    <name type="common">Marine phytoflagellate</name>
    <dbReference type="NCBI Taxonomy" id="83000"/>
    <lineage>
        <taxon>Eukaryota</taxon>
        <taxon>Sar</taxon>
        <taxon>Stramenopiles</taxon>
        <taxon>Ochrophyta</taxon>
        <taxon>Olisthodiscophyceae</taxon>
        <taxon>Olisthodiscaceae</taxon>
        <taxon>Olisthodiscus</taxon>
    </lineage>
</organism>
<feature type="initiator methionine" description="Removed" evidence="3">
    <location>
        <position position="1"/>
    </location>
</feature>
<feature type="chain" id="PRO_0000071871" description="Histone H2B">
    <location>
        <begin position="2"/>
        <end position="114"/>
    </location>
</feature>
<feature type="region of interest" description="Disordered" evidence="2">
    <location>
        <begin position="1"/>
        <end position="22"/>
    </location>
</feature>
<feature type="modified residue" description="N6-acetyllysine" evidence="3">
    <location>
        <position position="3"/>
    </location>
</feature>
<feature type="cross-link" description="Glycyl lysine isopeptide (Lys-Gly) (interchain with G-Cter in ubiquitin)" evidence="1">
    <location>
        <position position="110"/>
    </location>
</feature>
<comment type="function">
    <text>Core component of nucleosome. Nucleosomes wrap and compact DNA into chromatin, limiting DNA accessibility to the cellular machineries which require DNA as a template. Histones thereby play a central role in transcription regulation, DNA repair, DNA replication and chromosomal stability. DNA accessibility is regulated via a complex set of post-translational modifications of histones, also called histone code, and nucleosome remodeling.</text>
</comment>
<comment type="subunit">
    <text>The nucleosome is a histone octamer containing two molecules each of H2A, H2B, H3 and H4 assembled in one H3-H4 heterotetramer and two H2A-H2B heterodimers. The octamer wraps approximately 147 bp of DNA.</text>
</comment>
<comment type="subcellular location">
    <subcellularLocation>
        <location>Nucleus</location>
    </subcellularLocation>
    <subcellularLocation>
        <location>Chromosome</location>
    </subcellularLocation>
</comment>
<comment type="PTM">
    <text evidence="1">Monoubiquitination of Lys-110 gives a specific tag for epigenetic transcriptional activation and is also prerequisite for histone H3 'Lys-4' and 'Lys-79' methylation.</text>
</comment>
<comment type="similarity">
    <text evidence="4">Belongs to the histone H2B family.</text>
</comment>
<proteinExistence type="evidence at protein level"/>
<keyword id="KW-0007">Acetylation</keyword>
<keyword id="KW-0158">Chromosome</keyword>
<keyword id="KW-0903">Direct protein sequencing</keyword>
<keyword id="KW-0238">DNA-binding</keyword>
<keyword id="KW-1017">Isopeptide bond</keyword>
<keyword id="KW-0544">Nucleosome core</keyword>
<keyword id="KW-0539">Nucleus</keyword>
<keyword id="KW-0832">Ubl conjugation</keyword>
<accession>P82887</accession>
<sequence>MAKTPSKKAAKAPKKAGSKRNKRVETYSSYIYKVLKQVHPDTGISKRGMSIMNSFINDIFERLAGEASRLARYNKRSTLSSREIQTAVRLMLPGELAKHAVSEGTKAVTKFTSN</sequence>
<name>H2B_OLILU</name>
<evidence type="ECO:0000250" key="1"/>
<evidence type="ECO:0000256" key="2">
    <source>
        <dbReference type="SAM" id="MobiDB-lite"/>
    </source>
</evidence>
<evidence type="ECO:0000269" key="3">
    <source ref="1"/>
</evidence>
<evidence type="ECO:0000305" key="4"/>